<feature type="chain" id="PRO_0000071156" description="Uncharacterized J domain-containing protein C4H3.01">
    <location>
        <begin position="1"/>
        <end position="392"/>
    </location>
</feature>
<feature type="domain" description="J" evidence="1">
    <location>
        <begin position="7"/>
        <end position="76"/>
    </location>
</feature>
<feature type="modified residue" description="Phosphoserine" evidence="2">
    <location>
        <position position="108"/>
    </location>
</feature>
<gene>
    <name type="ORF">SPAC4H3.01</name>
</gene>
<evidence type="ECO:0000255" key="1">
    <source>
        <dbReference type="PROSITE-ProRule" id="PRU00286"/>
    </source>
</evidence>
<evidence type="ECO:0000269" key="2">
    <source>
    </source>
</evidence>
<protein>
    <recommendedName>
        <fullName>Uncharacterized J domain-containing protein C4H3.01</fullName>
    </recommendedName>
</protein>
<proteinExistence type="evidence at protein level"/>
<reference key="1">
    <citation type="journal article" date="2002" name="Nature">
        <title>The genome sequence of Schizosaccharomyces pombe.</title>
        <authorList>
            <person name="Wood V."/>
            <person name="Gwilliam R."/>
            <person name="Rajandream M.A."/>
            <person name="Lyne M.H."/>
            <person name="Lyne R."/>
            <person name="Stewart A."/>
            <person name="Sgouros J.G."/>
            <person name="Peat N."/>
            <person name="Hayles J."/>
            <person name="Baker S.G."/>
            <person name="Basham D."/>
            <person name="Bowman S."/>
            <person name="Brooks K."/>
            <person name="Brown D."/>
            <person name="Brown S."/>
            <person name="Chillingworth T."/>
            <person name="Churcher C.M."/>
            <person name="Collins M."/>
            <person name="Connor R."/>
            <person name="Cronin A."/>
            <person name="Davis P."/>
            <person name="Feltwell T."/>
            <person name="Fraser A."/>
            <person name="Gentles S."/>
            <person name="Goble A."/>
            <person name="Hamlin N."/>
            <person name="Harris D.E."/>
            <person name="Hidalgo J."/>
            <person name="Hodgson G."/>
            <person name="Holroyd S."/>
            <person name="Hornsby T."/>
            <person name="Howarth S."/>
            <person name="Huckle E.J."/>
            <person name="Hunt S."/>
            <person name="Jagels K."/>
            <person name="James K.D."/>
            <person name="Jones L."/>
            <person name="Jones M."/>
            <person name="Leather S."/>
            <person name="McDonald S."/>
            <person name="McLean J."/>
            <person name="Mooney P."/>
            <person name="Moule S."/>
            <person name="Mungall K.L."/>
            <person name="Murphy L.D."/>
            <person name="Niblett D."/>
            <person name="Odell C."/>
            <person name="Oliver K."/>
            <person name="O'Neil S."/>
            <person name="Pearson D."/>
            <person name="Quail M.A."/>
            <person name="Rabbinowitsch E."/>
            <person name="Rutherford K.M."/>
            <person name="Rutter S."/>
            <person name="Saunders D."/>
            <person name="Seeger K."/>
            <person name="Sharp S."/>
            <person name="Skelton J."/>
            <person name="Simmonds M.N."/>
            <person name="Squares R."/>
            <person name="Squares S."/>
            <person name="Stevens K."/>
            <person name="Taylor K."/>
            <person name="Taylor R.G."/>
            <person name="Tivey A."/>
            <person name="Walsh S.V."/>
            <person name="Warren T."/>
            <person name="Whitehead S."/>
            <person name="Woodward J.R."/>
            <person name="Volckaert G."/>
            <person name="Aert R."/>
            <person name="Robben J."/>
            <person name="Grymonprez B."/>
            <person name="Weltjens I."/>
            <person name="Vanstreels E."/>
            <person name="Rieger M."/>
            <person name="Schaefer M."/>
            <person name="Mueller-Auer S."/>
            <person name="Gabel C."/>
            <person name="Fuchs M."/>
            <person name="Duesterhoeft A."/>
            <person name="Fritzc C."/>
            <person name="Holzer E."/>
            <person name="Moestl D."/>
            <person name="Hilbert H."/>
            <person name="Borzym K."/>
            <person name="Langer I."/>
            <person name="Beck A."/>
            <person name="Lehrach H."/>
            <person name="Reinhardt R."/>
            <person name="Pohl T.M."/>
            <person name="Eger P."/>
            <person name="Zimmermann W."/>
            <person name="Wedler H."/>
            <person name="Wambutt R."/>
            <person name="Purnelle B."/>
            <person name="Goffeau A."/>
            <person name="Cadieu E."/>
            <person name="Dreano S."/>
            <person name="Gloux S."/>
            <person name="Lelaure V."/>
            <person name="Mottier S."/>
            <person name="Galibert F."/>
            <person name="Aves S.J."/>
            <person name="Xiang Z."/>
            <person name="Hunt C."/>
            <person name="Moore K."/>
            <person name="Hurst S.M."/>
            <person name="Lucas M."/>
            <person name="Rochet M."/>
            <person name="Gaillardin C."/>
            <person name="Tallada V.A."/>
            <person name="Garzon A."/>
            <person name="Thode G."/>
            <person name="Daga R.R."/>
            <person name="Cruzado L."/>
            <person name="Jimenez J."/>
            <person name="Sanchez M."/>
            <person name="del Rey F."/>
            <person name="Benito J."/>
            <person name="Dominguez A."/>
            <person name="Revuelta J.L."/>
            <person name="Moreno S."/>
            <person name="Armstrong J."/>
            <person name="Forsburg S.L."/>
            <person name="Cerutti L."/>
            <person name="Lowe T."/>
            <person name="McCombie W.R."/>
            <person name="Paulsen I."/>
            <person name="Potashkin J."/>
            <person name="Shpakovski G.V."/>
            <person name="Ussery D."/>
            <person name="Barrell B.G."/>
            <person name="Nurse P."/>
        </authorList>
    </citation>
    <scope>NUCLEOTIDE SEQUENCE [LARGE SCALE GENOMIC DNA]</scope>
    <source>
        <strain>972 / ATCC 24843</strain>
    </source>
</reference>
<reference key="2">
    <citation type="journal article" date="2008" name="J. Proteome Res.">
        <title>Phosphoproteome analysis of fission yeast.</title>
        <authorList>
            <person name="Wilson-Grady J.T."/>
            <person name="Villen J."/>
            <person name="Gygi S.P."/>
        </authorList>
    </citation>
    <scope>PHOSPHORYLATION [LARGE SCALE ANALYSIS] AT SER-108</scope>
    <scope>IDENTIFICATION BY MASS SPECTROMETRY</scope>
</reference>
<sequence length="392" mass="44769">MATPVDTEYYDLLGISTDATAVDIKKAYRKLAVKYHPDKNPDDPQGASEKFQKISEAYQVLGDEKLRSQYDQFGKEKAVPEQGFTDAYDFFTNLFGGAPFREWVGELSFVKEMFREEDSAVEQGQMNDKQQLLLESSEPTPTIKQQFNDRKKNAQIREREALAKREQEMIEDRRQRIKEVTENLEKRLDDWIAKATTEEGLNALREKYTQEANTLRIESFGVEILHAIGEVYTQKGRTVLKSSKFGIGGFWSRMKEKGKIARATWDTVSAAMDAKLSIDQMQKLEDKGEDQASAEERAKLELDITGKILRASWCGARYDIQGVLREACSNLLKKRVPTELRLKRAHALLEIGTIFSNVEADPDDPNRIFENLILENKKKRKKGSEAKPPKAT</sequence>
<dbReference type="EMBL" id="CU329670">
    <property type="protein sequence ID" value="CAA93340.1"/>
    <property type="molecule type" value="Genomic_DNA"/>
</dbReference>
<dbReference type="PIR" id="T38881">
    <property type="entry name" value="T38881"/>
</dbReference>
<dbReference type="RefSeq" id="NP_594337.1">
    <property type="nucleotide sequence ID" value="NM_001019758.2"/>
</dbReference>
<dbReference type="SMR" id="Q10209"/>
<dbReference type="BioGRID" id="280086">
    <property type="interactions" value="15"/>
</dbReference>
<dbReference type="FunCoup" id="Q10209">
    <property type="interactions" value="445"/>
</dbReference>
<dbReference type="IntAct" id="Q10209">
    <property type="interactions" value="2"/>
</dbReference>
<dbReference type="iPTMnet" id="Q10209"/>
<dbReference type="PaxDb" id="4896-SPAC4H3.01.1"/>
<dbReference type="EnsemblFungi" id="SPAC4H3.01.1">
    <property type="protein sequence ID" value="SPAC4H3.01.1:pep"/>
    <property type="gene ID" value="SPAC4H3.01"/>
</dbReference>
<dbReference type="KEGG" id="spo:2543672"/>
<dbReference type="PomBase" id="SPAC4H3.01"/>
<dbReference type="VEuPathDB" id="FungiDB:SPAC4H3.01"/>
<dbReference type="eggNOG" id="KOG0691">
    <property type="taxonomic scope" value="Eukaryota"/>
</dbReference>
<dbReference type="HOGENOM" id="CLU_025145_3_1_1"/>
<dbReference type="InParanoid" id="Q10209"/>
<dbReference type="OMA" id="FREWVGE"/>
<dbReference type="PhylomeDB" id="Q10209"/>
<dbReference type="PRO" id="PR:Q10209"/>
<dbReference type="Proteomes" id="UP000002485">
    <property type="component" value="Chromosome I"/>
</dbReference>
<dbReference type="GO" id="GO:0032153">
    <property type="term" value="C:cell division site"/>
    <property type="evidence" value="ECO:0007005"/>
    <property type="project" value="PomBase"/>
</dbReference>
<dbReference type="GO" id="GO:0051286">
    <property type="term" value="C:cell tip"/>
    <property type="evidence" value="ECO:0007005"/>
    <property type="project" value="PomBase"/>
</dbReference>
<dbReference type="GO" id="GO:0005829">
    <property type="term" value="C:cytosol"/>
    <property type="evidence" value="ECO:0007005"/>
    <property type="project" value="PomBase"/>
</dbReference>
<dbReference type="GO" id="GO:0005739">
    <property type="term" value="C:mitochondrion"/>
    <property type="evidence" value="ECO:0007669"/>
    <property type="project" value="GOC"/>
</dbReference>
<dbReference type="GO" id="GO:0030544">
    <property type="term" value="F:Hsp70 protein binding"/>
    <property type="evidence" value="ECO:0000255"/>
    <property type="project" value="PomBase"/>
</dbReference>
<dbReference type="GO" id="GO:0016558">
    <property type="term" value="P:protein import into peroxisome matrix"/>
    <property type="evidence" value="ECO:0000318"/>
    <property type="project" value="GO_Central"/>
</dbReference>
<dbReference type="GO" id="GO:0045040">
    <property type="term" value="P:protein insertion into mitochondrial outer membrane"/>
    <property type="evidence" value="ECO:0000266"/>
    <property type="project" value="PomBase"/>
</dbReference>
<dbReference type="CDD" id="cd06257">
    <property type="entry name" value="DnaJ"/>
    <property type="match status" value="1"/>
</dbReference>
<dbReference type="FunFam" id="1.10.287.110:FF:000028">
    <property type="entry name" value="DnaJ domain protein"/>
    <property type="match status" value="1"/>
</dbReference>
<dbReference type="Gene3D" id="1.10.287.110">
    <property type="entry name" value="DnaJ domain"/>
    <property type="match status" value="1"/>
</dbReference>
<dbReference type="InterPro" id="IPR001623">
    <property type="entry name" value="DnaJ_domain"/>
</dbReference>
<dbReference type="InterPro" id="IPR018253">
    <property type="entry name" value="DnaJ_domain_CS"/>
</dbReference>
<dbReference type="InterPro" id="IPR026894">
    <property type="entry name" value="DnaJ_X"/>
</dbReference>
<dbReference type="InterPro" id="IPR036869">
    <property type="entry name" value="J_dom_sf"/>
</dbReference>
<dbReference type="InterPro" id="IPR052814">
    <property type="entry name" value="Peroxisomal_DnaJ"/>
</dbReference>
<dbReference type="PANTHER" id="PTHR45006">
    <property type="entry name" value="DNAJ-LIKE PROTEIN 1"/>
    <property type="match status" value="1"/>
</dbReference>
<dbReference type="PANTHER" id="PTHR45006:SF1">
    <property type="entry name" value="DNAJ-LIKE PROTEIN 1"/>
    <property type="match status" value="1"/>
</dbReference>
<dbReference type="Pfam" id="PF00226">
    <property type="entry name" value="DnaJ"/>
    <property type="match status" value="1"/>
</dbReference>
<dbReference type="Pfam" id="PF14308">
    <property type="entry name" value="DnaJ-X"/>
    <property type="match status" value="1"/>
</dbReference>
<dbReference type="PRINTS" id="PR00625">
    <property type="entry name" value="JDOMAIN"/>
</dbReference>
<dbReference type="SMART" id="SM00271">
    <property type="entry name" value="DnaJ"/>
    <property type="match status" value="1"/>
</dbReference>
<dbReference type="SUPFAM" id="SSF46565">
    <property type="entry name" value="Chaperone J-domain"/>
    <property type="match status" value="1"/>
</dbReference>
<dbReference type="PROSITE" id="PS00636">
    <property type="entry name" value="DNAJ_1"/>
    <property type="match status" value="1"/>
</dbReference>
<dbReference type="PROSITE" id="PS50076">
    <property type="entry name" value="DNAJ_2"/>
    <property type="match status" value="1"/>
</dbReference>
<organism>
    <name type="scientific">Schizosaccharomyces pombe (strain 972 / ATCC 24843)</name>
    <name type="common">Fission yeast</name>
    <dbReference type="NCBI Taxonomy" id="284812"/>
    <lineage>
        <taxon>Eukaryota</taxon>
        <taxon>Fungi</taxon>
        <taxon>Dikarya</taxon>
        <taxon>Ascomycota</taxon>
        <taxon>Taphrinomycotina</taxon>
        <taxon>Schizosaccharomycetes</taxon>
        <taxon>Schizosaccharomycetales</taxon>
        <taxon>Schizosaccharomycetaceae</taxon>
        <taxon>Schizosaccharomyces</taxon>
    </lineage>
</organism>
<name>YAY1_SCHPO</name>
<keyword id="KW-0143">Chaperone</keyword>
<keyword id="KW-0597">Phosphoprotein</keyword>
<keyword id="KW-1185">Reference proteome</keyword>
<accession>Q10209</accession>